<name>PA2A1_BOTPA</name>
<dbReference type="EC" id="3.1.1.4" evidence="2"/>
<dbReference type="SMR" id="C0HJU3"/>
<dbReference type="GO" id="GO:0005576">
    <property type="term" value="C:extracellular region"/>
    <property type="evidence" value="ECO:0007669"/>
    <property type="project" value="UniProtKB-SubCell"/>
</dbReference>
<dbReference type="GO" id="GO:0005509">
    <property type="term" value="F:calcium ion binding"/>
    <property type="evidence" value="ECO:0007669"/>
    <property type="project" value="InterPro"/>
</dbReference>
<dbReference type="GO" id="GO:0047498">
    <property type="term" value="F:calcium-dependent phospholipase A2 activity"/>
    <property type="evidence" value="ECO:0007669"/>
    <property type="project" value="TreeGrafter"/>
</dbReference>
<dbReference type="GO" id="GO:0005543">
    <property type="term" value="F:phospholipid binding"/>
    <property type="evidence" value="ECO:0007669"/>
    <property type="project" value="TreeGrafter"/>
</dbReference>
<dbReference type="GO" id="GO:0090729">
    <property type="term" value="F:toxin activity"/>
    <property type="evidence" value="ECO:0007669"/>
    <property type="project" value="UniProtKB-KW"/>
</dbReference>
<dbReference type="GO" id="GO:0050482">
    <property type="term" value="P:arachidonate secretion"/>
    <property type="evidence" value="ECO:0007669"/>
    <property type="project" value="InterPro"/>
</dbReference>
<dbReference type="GO" id="GO:0016042">
    <property type="term" value="P:lipid catabolic process"/>
    <property type="evidence" value="ECO:0007669"/>
    <property type="project" value="UniProtKB-KW"/>
</dbReference>
<dbReference type="GO" id="GO:0042130">
    <property type="term" value="P:negative regulation of T cell proliferation"/>
    <property type="evidence" value="ECO:0007669"/>
    <property type="project" value="TreeGrafter"/>
</dbReference>
<dbReference type="GO" id="GO:0006644">
    <property type="term" value="P:phospholipid metabolic process"/>
    <property type="evidence" value="ECO:0007669"/>
    <property type="project" value="InterPro"/>
</dbReference>
<dbReference type="Gene3D" id="1.20.90.10">
    <property type="entry name" value="Phospholipase A2 domain"/>
    <property type="match status" value="1"/>
</dbReference>
<dbReference type="InterPro" id="IPR001211">
    <property type="entry name" value="PLipase_A2"/>
</dbReference>
<dbReference type="InterPro" id="IPR016090">
    <property type="entry name" value="PLipase_A2_dom"/>
</dbReference>
<dbReference type="InterPro" id="IPR036444">
    <property type="entry name" value="PLipase_A2_dom_sf"/>
</dbReference>
<dbReference type="PANTHER" id="PTHR11716">
    <property type="entry name" value="PHOSPHOLIPASE A2 FAMILY MEMBER"/>
    <property type="match status" value="1"/>
</dbReference>
<dbReference type="PANTHER" id="PTHR11716:SF9">
    <property type="entry name" value="PHOSPHOLIPASE A2, MEMBRANE ASSOCIATED"/>
    <property type="match status" value="1"/>
</dbReference>
<dbReference type="Pfam" id="PF00068">
    <property type="entry name" value="Phospholip_A2_1"/>
    <property type="match status" value="1"/>
</dbReference>
<dbReference type="PRINTS" id="PR00389">
    <property type="entry name" value="PHPHLIPASEA2"/>
</dbReference>
<dbReference type="SMART" id="SM00085">
    <property type="entry name" value="PA2c"/>
    <property type="match status" value="1"/>
</dbReference>
<dbReference type="SUPFAM" id="SSF48619">
    <property type="entry name" value="Phospholipase A2, PLA2"/>
    <property type="match status" value="1"/>
</dbReference>
<feature type="chain" id="PRO_0000433784" description="Acidic phospholipase A2" evidence="2">
    <location>
        <begin position="1"/>
        <end position="48"/>
    </location>
</feature>
<feature type="active site" evidence="1">
    <location>
        <position position="47"/>
    </location>
</feature>
<feature type="binding site" evidence="1">
    <location>
        <position position="27"/>
    </location>
    <ligand>
        <name>Ca(2+)</name>
        <dbReference type="ChEBI" id="CHEBI:29108"/>
    </ligand>
</feature>
<feature type="binding site" evidence="1">
    <location>
        <position position="29"/>
    </location>
    <ligand>
        <name>Ca(2+)</name>
        <dbReference type="ChEBI" id="CHEBI:29108"/>
    </ligand>
</feature>
<feature type="binding site" evidence="1">
    <location>
        <position position="31"/>
    </location>
    <ligand>
        <name>Ca(2+)</name>
        <dbReference type="ChEBI" id="CHEBI:29108"/>
    </ligand>
</feature>
<feature type="binding site" evidence="1">
    <location>
        <position position="48"/>
    </location>
    <ligand>
        <name>Ca(2+)</name>
        <dbReference type="ChEBI" id="CHEBI:29108"/>
    </ligand>
</feature>
<feature type="disulfide bond" evidence="1">
    <location>
        <begin position="26"/>
        <end status="unknown"/>
    </location>
</feature>
<feature type="disulfide bond" evidence="1">
    <location>
        <begin position="28"/>
        <end position="44"/>
    </location>
</feature>
<feature type="disulfide bond" evidence="1">
    <location>
        <begin position="44"/>
        <end status="unknown"/>
    </location>
</feature>
<feature type="non-terminal residue" evidence="3">
    <location>
        <position position="48"/>
    </location>
</feature>
<reference evidence="4" key="1">
    <citation type="journal article" date="2007" name="Toxicon">
        <title>Isolation and functional characterization of a new myotoxic acidic phospholipase A(2) from Bothrops pauloensis snake venom.</title>
        <authorList>
            <person name="Rodrigues R.S."/>
            <person name="Izidoro L.F."/>
            <person name="Teixeira S.S."/>
            <person name="Silveira L.B."/>
            <person name="Hamaguchi A."/>
            <person name="Homsi-Brandeburgo M.I."/>
            <person name="Selistre-de-Araujo H.S."/>
            <person name="Giglio J.R."/>
            <person name="Fuly A.L."/>
            <person name="Soares A.M."/>
            <person name="Rodrigues V.M."/>
        </authorList>
    </citation>
    <scope>PROTEIN SEQUENCE</scope>
    <scope>FUNCTION</scope>
    <scope>COFACTOR</scope>
    <scope>ACTIVITY REGULATION</scope>
    <scope>CATALYTIC ACTIVITY</scope>
    <scope>BIOPHYSICOCHEMICAL PROPERTIES</scope>
    <scope>SUBUNIT</scope>
    <scope>SUBCELLULAR LOCATION</scope>
    <source>
        <tissue evidence="3">Venom</tissue>
    </source>
</reference>
<organism>
    <name type="scientific">Bothrops pauloensis</name>
    <name type="common">Neuwied's lancehead</name>
    <name type="synonym">Bothrops neuwiedi pauloensis</name>
    <dbReference type="NCBI Taxonomy" id="1042543"/>
    <lineage>
        <taxon>Eukaryota</taxon>
        <taxon>Metazoa</taxon>
        <taxon>Chordata</taxon>
        <taxon>Craniata</taxon>
        <taxon>Vertebrata</taxon>
        <taxon>Euteleostomi</taxon>
        <taxon>Lepidosauria</taxon>
        <taxon>Squamata</taxon>
        <taxon>Bifurcata</taxon>
        <taxon>Unidentata</taxon>
        <taxon>Episquamata</taxon>
        <taxon>Toxicofera</taxon>
        <taxon>Serpentes</taxon>
        <taxon>Colubroidea</taxon>
        <taxon>Viperidae</taxon>
        <taxon>Crotalinae</taxon>
        <taxon>Bothrops</taxon>
    </lineage>
</organism>
<proteinExistence type="evidence at protein level"/>
<protein>
    <recommendedName>
        <fullName evidence="3">Acidic phospholipase A2</fullName>
        <shortName evidence="3">Bp-PLA2</shortName>
        <ecNumber evidence="2">3.1.1.4</ecNumber>
    </recommendedName>
    <alternativeName>
        <fullName evidence="1">Phosphatidylcholine 2-acylhydrolase</fullName>
    </alternativeName>
</protein>
<comment type="function">
    <text evidence="2">Snake venom phospholipase A2 (PLA2) that shows myotoxicity and induces paw edema in mice (PubMed:17451767). Exhibits indirect hemolytic activity (PubMed:17451767). Inhibits platelet aggregation induced by ADP and collagen (PubMed:17451767). PLA2 catalyzes the calcium-dependent hydrolysis of the 2-acyl groups in 3-sn-phosphoglycerides (PubMed:17451767).</text>
</comment>
<comment type="catalytic activity">
    <reaction evidence="2">
        <text>a 1,2-diacyl-sn-glycero-3-phosphocholine + H2O = a 1-acyl-sn-glycero-3-phosphocholine + a fatty acid + H(+)</text>
        <dbReference type="Rhea" id="RHEA:15801"/>
        <dbReference type="ChEBI" id="CHEBI:15377"/>
        <dbReference type="ChEBI" id="CHEBI:15378"/>
        <dbReference type="ChEBI" id="CHEBI:28868"/>
        <dbReference type="ChEBI" id="CHEBI:57643"/>
        <dbReference type="ChEBI" id="CHEBI:58168"/>
        <dbReference type="EC" id="3.1.1.4"/>
    </reaction>
</comment>
<comment type="cofactor">
    <cofactor evidence="2">
        <name>Ca(2+)</name>
        <dbReference type="ChEBI" id="CHEBI:29108"/>
    </cofactor>
    <text evidence="1">Binds 1 Ca(2+) ion.</text>
</comment>
<comment type="activity regulation">
    <text evidence="2">Inhibited by EDTA. Inhibited by Ba(2+), Cu(+), Fe(2+) and Zn(2+) ions and, to a lesser extent, by Mn(2+) and Mg(2+) ions.</text>
</comment>
<comment type="biophysicochemical properties">
    <phDependence>
        <text evidence="2">Optimum pH is 7.0-8.5. Activity decreases rapidly at basic or acidic pH and is virtually absent at pH 12 and pH 3.5, respectively.</text>
    </phDependence>
</comment>
<comment type="subunit">
    <text evidence="2">Monomer.</text>
</comment>
<comment type="subcellular location">
    <subcellularLocation>
        <location evidence="2">Secreted</location>
    </subcellularLocation>
</comment>
<comment type="tissue specificity">
    <text evidence="5">Expressed by the venom gland.</text>
</comment>
<comment type="miscellaneous">
    <text evidence="2">On the 2D-gel the determined pI of this protein is: 4.3, its MW is: 15.8 kDa.</text>
</comment>
<comment type="similarity">
    <text evidence="4">Belongs to the phospholipase A2 family. Group II subfamily. D49 sub-subfamily.</text>
</comment>
<accession>C0HJU3</accession>
<evidence type="ECO:0000250" key="1">
    <source>
        <dbReference type="UniProtKB" id="P14418"/>
    </source>
</evidence>
<evidence type="ECO:0000269" key="2">
    <source>
    </source>
</evidence>
<evidence type="ECO:0000303" key="3">
    <source>
    </source>
</evidence>
<evidence type="ECO:0000305" key="4"/>
<evidence type="ECO:0000305" key="5">
    <source>
    </source>
</evidence>
<keyword id="KW-0106">Calcium</keyword>
<keyword id="KW-0903">Direct protein sequencing</keyword>
<keyword id="KW-1015">Disulfide bond</keyword>
<keyword id="KW-1199">Hemostasis impairing toxin</keyword>
<keyword id="KW-0378">Hydrolase</keyword>
<keyword id="KW-0442">Lipid degradation</keyword>
<keyword id="KW-0443">Lipid metabolism</keyword>
<keyword id="KW-0479">Metal-binding</keyword>
<keyword id="KW-1201">Platelet aggregation inhibiting toxin</keyword>
<keyword id="KW-0964">Secreted</keyword>
<keyword id="KW-0800">Toxin</keyword>
<sequence length="48" mass="5544">NLVQFKTLIMKIAGRSVVYKYFYYGCYCGWGGIGQPRDATDRCCFVHD</sequence>